<protein>
    <recommendedName>
        <fullName evidence="1">Acyl-[acyl-carrier-protein]--UDP-N-acetylglucosamine O-acyltransferase</fullName>
        <shortName evidence="1">UDP-N-acetylglucosamine acyltransferase</shortName>
        <ecNumber evidence="1">2.3.1.129</ecNumber>
    </recommendedName>
</protein>
<proteinExistence type="inferred from homology"/>
<reference key="1">
    <citation type="journal article" date="2009" name="Genome Biol.">
        <title>Genomic and genetic analyses of diversity and plant interactions of Pseudomonas fluorescens.</title>
        <authorList>
            <person name="Silby M.W."/>
            <person name="Cerdeno-Tarraga A.M."/>
            <person name="Vernikos G.S."/>
            <person name="Giddens S.R."/>
            <person name="Jackson R.W."/>
            <person name="Preston G.M."/>
            <person name="Zhang X.-X."/>
            <person name="Moon C.D."/>
            <person name="Gehrig S.M."/>
            <person name="Godfrey S.A.C."/>
            <person name="Knight C.G."/>
            <person name="Malone J.G."/>
            <person name="Robinson Z."/>
            <person name="Spiers A.J."/>
            <person name="Harris S."/>
            <person name="Challis G.L."/>
            <person name="Yaxley A.M."/>
            <person name="Harris D."/>
            <person name="Seeger K."/>
            <person name="Murphy L."/>
            <person name="Rutter S."/>
            <person name="Squares R."/>
            <person name="Quail M.A."/>
            <person name="Saunders E."/>
            <person name="Mavromatis K."/>
            <person name="Brettin T.S."/>
            <person name="Bentley S.D."/>
            <person name="Hothersall J."/>
            <person name="Stephens E."/>
            <person name="Thomas C.M."/>
            <person name="Parkhill J."/>
            <person name="Levy S.B."/>
            <person name="Rainey P.B."/>
            <person name="Thomson N.R."/>
        </authorList>
    </citation>
    <scope>NUCLEOTIDE SEQUENCE [LARGE SCALE GENOMIC DNA]</scope>
    <source>
        <strain>Pf0-1</strain>
    </source>
</reference>
<evidence type="ECO:0000255" key="1">
    <source>
        <dbReference type="HAMAP-Rule" id="MF_00387"/>
    </source>
</evidence>
<accession>Q3KHA0</accession>
<gene>
    <name evidence="1" type="primary">lpxA</name>
    <name type="ordered locus">Pfl01_1113</name>
</gene>
<sequence>MSLIDPRAIIDPSAVLADGVEVGPWSIIGAGVEIGEGTVIGPHVILKGPTRIGKHNRIYQFSSVGEDTPDLKYKGEETRLVIGDHNVIREGVTIHRGTVQDRSETTLGDHNLIMAYAHIGHDSVIGNHCILVNNTALAGHVHVDDWAILSGFTLVHQYCHIGAHSFSGMGTAIGKDVPAFVTVFGNPAEARSMNFEGMRRRGFSEDAIHALRRAYKTVYRQGLTVEQALAELAEPSAQFPEVAMFRDSIQSSTRGITR</sequence>
<dbReference type="EC" id="2.3.1.129" evidence="1"/>
<dbReference type="EMBL" id="CP000094">
    <property type="protein sequence ID" value="ABA72856.1"/>
    <property type="molecule type" value="Genomic_DNA"/>
</dbReference>
<dbReference type="RefSeq" id="WP_007954792.1">
    <property type="nucleotide sequence ID" value="NC_007492.2"/>
</dbReference>
<dbReference type="SMR" id="Q3KHA0"/>
<dbReference type="KEGG" id="pfo:Pfl01_1113"/>
<dbReference type="eggNOG" id="COG1043">
    <property type="taxonomic scope" value="Bacteria"/>
</dbReference>
<dbReference type="HOGENOM" id="CLU_061249_0_0_6"/>
<dbReference type="UniPathway" id="UPA00359">
    <property type="reaction ID" value="UER00477"/>
</dbReference>
<dbReference type="Proteomes" id="UP000002704">
    <property type="component" value="Chromosome"/>
</dbReference>
<dbReference type="GO" id="GO:0005737">
    <property type="term" value="C:cytoplasm"/>
    <property type="evidence" value="ECO:0007669"/>
    <property type="project" value="UniProtKB-SubCell"/>
</dbReference>
<dbReference type="GO" id="GO:0016020">
    <property type="term" value="C:membrane"/>
    <property type="evidence" value="ECO:0007669"/>
    <property type="project" value="GOC"/>
</dbReference>
<dbReference type="GO" id="GO:0008780">
    <property type="term" value="F:acyl-[acyl-carrier-protein]-UDP-N-acetylglucosamine O-acyltransferase activity"/>
    <property type="evidence" value="ECO:0007669"/>
    <property type="project" value="UniProtKB-UniRule"/>
</dbReference>
<dbReference type="GO" id="GO:0009245">
    <property type="term" value="P:lipid A biosynthetic process"/>
    <property type="evidence" value="ECO:0007669"/>
    <property type="project" value="UniProtKB-UniRule"/>
</dbReference>
<dbReference type="CDD" id="cd03351">
    <property type="entry name" value="LbH_UDP-GlcNAc_AT"/>
    <property type="match status" value="1"/>
</dbReference>
<dbReference type="FunFam" id="2.160.10.10:FF:000003">
    <property type="entry name" value="Acyl-[acyl-carrier-protein]--UDP-N-acetylglucosamine O-acyltransferase"/>
    <property type="match status" value="1"/>
</dbReference>
<dbReference type="Gene3D" id="2.160.10.10">
    <property type="entry name" value="Hexapeptide repeat proteins"/>
    <property type="match status" value="1"/>
</dbReference>
<dbReference type="Gene3D" id="1.20.1180.10">
    <property type="entry name" value="Udp N-acetylglucosamine O-acyltransferase, C-terminal domain"/>
    <property type="match status" value="1"/>
</dbReference>
<dbReference type="HAMAP" id="MF_00387">
    <property type="entry name" value="LpxA"/>
    <property type="match status" value="1"/>
</dbReference>
<dbReference type="InterPro" id="IPR029098">
    <property type="entry name" value="Acetyltransf_C"/>
</dbReference>
<dbReference type="InterPro" id="IPR037157">
    <property type="entry name" value="Acetyltransf_C_sf"/>
</dbReference>
<dbReference type="InterPro" id="IPR001451">
    <property type="entry name" value="Hexapep"/>
</dbReference>
<dbReference type="InterPro" id="IPR018357">
    <property type="entry name" value="Hexapep_transf_CS"/>
</dbReference>
<dbReference type="InterPro" id="IPR010137">
    <property type="entry name" value="Lipid_A_LpxA"/>
</dbReference>
<dbReference type="InterPro" id="IPR011004">
    <property type="entry name" value="Trimer_LpxA-like_sf"/>
</dbReference>
<dbReference type="NCBIfam" id="TIGR01852">
    <property type="entry name" value="lipid_A_lpxA"/>
    <property type="match status" value="1"/>
</dbReference>
<dbReference type="NCBIfam" id="NF003657">
    <property type="entry name" value="PRK05289.1"/>
    <property type="match status" value="1"/>
</dbReference>
<dbReference type="PANTHER" id="PTHR43480">
    <property type="entry name" value="ACYL-[ACYL-CARRIER-PROTEIN]--UDP-N-ACETYLGLUCOSAMINE O-ACYLTRANSFERASE"/>
    <property type="match status" value="1"/>
</dbReference>
<dbReference type="PANTHER" id="PTHR43480:SF1">
    <property type="entry name" value="ACYL-[ACYL-CARRIER-PROTEIN]--UDP-N-ACETYLGLUCOSAMINE O-ACYLTRANSFERASE, MITOCHONDRIAL-RELATED"/>
    <property type="match status" value="1"/>
</dbReference>
<dbReference type="Pfam" id="PF13720">
    <property type="entry name" value="Acetyltransf_11"/>
    <property type="match status" value="1"/>
</dbReference>
<dbReference type="Pfam" id="PF00132">
    <property type="entry name" value="Hexapep"/>
    <property type="match status" value="2"/>
</dbReference>
<dbReference type="PIRSF" id="PIRSF000456">
    <property type="entry name" value="UDP-GlcNAc_acltr"/>
    <property type="match status" value="1"/>
</dbReference>
<dbReference type="SUPFAM" id="SSF51161">
    <property type="entry name" value="Trimeric LpxA-like enzymes"/>
    <property type="match status" value="1"/>
</dbReference>
<dbReference type="PROSITE" id="PS00101">
    <property type="entry name" value="HEXAPEP_TRANSFERASES"/>
    <property type="match status" value="1"/>
</dbReference>
<comment type="function">
    <text evidence="1">Involved in the biosynthesis of lipid A, a phosphorylated glycolipid that anchors the lipopolysaccharide to the outer membrane of the cell.</text>
</comment>
<comment type="catalytic activity">
    <reaction evidence="1">
        <text>a (3R)-hydroxyacyl-[ACP] + UDP-N-acetyl-alpha-D-glucosamine = a UDP-3-O-[(3R)-3-hydroxyacyl]-N-acetyl-alpha-D-glucosamine + holo-[ACP]</text>
        <dbReference type="Rhea" id="RHEA:67812"/>
        <dbReference type="Rhea" id="RHEA-COMP:9685"/>
        <dbReference type="Rhea" id="RHEA-COMP:9945"/>
        <dbReference type="ChEBI" id="CHEBI:57705"/>
        <dbReference type="ChEBI" id="CHEBI:64479"/>
        <dbReference type="ChEBI" id="CHEBI:78827"/>
        <dbReference type="ChEBI" id="CHEBI:173225"/>
        <dbReference type="EC" id="2.3.1.129"/>
    </reaction>
</comment>
<comment type="pathway">
    <text evidence="1">Glycolipid biosynthesis; lipid IV(A) biosynthesis; lipid IV(A) from (3R)-3-hydroxytetradecanoyl-[acyl-carrier-protein] and UDP-N-acetyl-alpha-D-glucosamine: step 1/6.</text>
</comment>
<comment type="subunit">
    <text evidence="1">Homotrimer.</text>
</comment>
<comment type="subcellular location">
    <subcellularLocation>
        <location evidence="1">Cytoplasm</location>
    </subcellularLocation>
</comment>
<comment type="similarity">
    <text evidence="1">Belongs to the transferase hexapeptide repeat family. LpxA subfamily.</text>
</comment>
<organism>
    <name type="scientific">Pseudomonas fluorescens (strain Pf0-1)</name>
    <dbReference type="NCBI Taxonomy" id="205922"/>
    <lineage>
        <taxon>Bacteria</taxon>
        <taxon>Pseudomonadati</taxon>
        <taxon>Pseudomonadota</taxon>
        <taxon>Gammaproteobacteria</taxon>
        <taxon>Pseudomonadales</taxon>
        <taxon>Pseudomonadaceae</taxon>
        <taxon>Pseudomonas</taxon>
    </lineage>
</organism>
<name>LPXA_PSEPF</name>
<feature type="chain" id="PRO_0000302588" description="Acyl-[acyl-carrier-protein]--UDP-N-acetylglucosamine O-acyltransferase">
    <location>
        <begin position="1"/>
        <end position="258"/>
    </location>
</feature>
<keyword id="KW-0012">Acyltransferase</keyword>
<keyword id="KW-0963">Cytoplasm</keyword>
<keyword id="KW-0441">Lipid A biosynthesis</keyword>
<keyword id="KW-0444">Lipid biosynthesis</keyword>
<keyword id="KW-0443">Lipid metabolism</keyword>
<keyword id="KW-0677">Repeat</keyword>
<keyword id="KW-0808">Transferase</keyword>